<proteinExistence type="inferred from homology"/>
<keyword id="KW-0158">Chromosome</keyword>
<keyword id="KW-0238">DNA-binding</keyword>
<keyword id="KW-0539">Nucleus</keyword>
<comment type="function">
    <text>Histones H1 are necessary for the condensation of nucleosome chains into higher-order structures.</text>
</comment>
<comment type="subcellular location">
    <subcellularLocation>
        <location>Nucleus</location>
    </subcellularLocation>
    <subcellularLocation>
        <location>Chromosome</location>
    </subcellularLocation>
</comment>
<comment type="similarity">
    <text evidence="1">Belongs to the histone H1/H5 family.</text>
</comment>
<evidence type="ECO:0000255" key="1">
    <source>
        <dbReference type="PROSITE-ProRule" id="PRU00837"/>
    </source>
</evidence>
<evidence type="ECO:0000256" key="2">
    <source>
        <dbReference type="SAM" id="MobiDB-lite"/>
    </source>
</evidence>
<reference key="1">
    <citation type="journal article" date="1994" name="J. Cell Biol.">
        <title>Structurally divergent histone H1 variants in chromosomes containing highly condensed interphase chromatin.</title>
        <authorList>
            <person name="Schulze E."/>
            <person name="Nagel S."/>
            <person name="Gavenis K."/>
            <person name="Grossbach U."/>
        </authorList>
    </citation>
    <scope>NUCLEOTIDE SEQUENCE [GENOMIC DNA]</scope>
</reference>
<feature type="chain" id="PRO_0000195974" description="Histone H1-II">
    <location>
        <begin position="1"/>
        <end position="232"/>
    </location>
</feature>
<feature type="domain" description="H15" evidence="1">
    <location>
        <begin position="39"/>
        <end position="114"/>
    </location>
</feature>
<feature type="region of interest" description="Disordered" evidence="2">
    <location>
        <begin position="1"/>
        <end position="44"/>
    </location>
</feature>
<feature type="region of interest" description="Disordered" evidence="2">
    <location>
        <begin position="103"/>
        <end position="232"/>
    </location>
</feature>
<feature type="compositionally biased region" description="Low complexity" evidence="2">
    <location>
        <begin position="1"/>
        <end position="18"/>
    </location>
</feature>
<feature type="compositionally biased region" description="Basic residues" evidence="2">
    <location>
        <begin position="149"/>
        <end position="171"/>
    </location>
</feature>
<feature type="compositionally biased region" description="Basic residues" evidence="2">
    <location>
        <begin position="179"/>
        <end position="232"/>
    </location>
</feature>
<accession>P40264</accession>
<organism>
    <name type="scientific">Glyptotendipes barbipes</name>
    <name type="common">Midge</name>
    <name type="synonym">Chironomus barbipes</name>
    <dbReference type="NCBI Taxonomy" id="33399"/>
    <lineage>
        <taxon>Eukaryota</taxon>
        <taxon>Metazoa</taxon>
        <taxon>Ecdysozoa</taxon>
        <taxon>Arthropoda</taxon>
        <taxon>Hexapoda</taxon>
        <taxon>Insecta</taxon>
        <taxon>Pterygota</taxon>
        <taxon>Neoptera</taxon>
        <taxon>Endopterygota</taxon>
        <taxon>Diptera</taxon>
        <taxon>Nematocera</taxon>
        <taxon>Chironomoidea</taxon>
        <taxon>Chironomidae</taxon>
        <taxon>Chironominae</taxon>
        <taxon>Glyptotendipes</taxon>
    </lineage>
</organism>
<protein>
    <recommendedName>
        <fullName>Histone H1-II</fullName>
    </recommendedName>
</protein>
<dbReference type="EMBL" id="L29102">
    <property type="protein sequence ID" value="AAA62321.1"/>
    <property type="molecule type" value="Genomic_DNA"/>
</dbReference>
<dbReference type="SMR" id="P40264"/>
<dbReference type="GO" id="GO:0000786">
    <property type="term" value="C:nucleosome"/>
    <property type="evidence" value="ECO:0007669"/>
    <property type="project" value="InterPro"/>
</dbReference>
<dbReference type="GO" id="GO:0005634">
    <property type="term" value="C:nucleus"/>
    <property type="evidence" value="ECO:0007669"/>
    <property type="project" value="UniProtKB-SubCell"/>
</dbReference>
<dbReference type="GO" id="GO:0003677">
    <property type="term" value="F:DNA binding"/>
    <property type="evidence" value="ECO:0007669"/>
    <property type="project" value="UniProtKB-KW"/>
</dbReference>
<dbReference type="GO" id="GO:0030527">
    <property type="term" value="F:structural constituent of chromatin"/>
    <property type="evidence" value="ECO:0007669"/>
    <property type="project" value="InterPro"/>
</dbReference>
<dbReference type="GO" id="GO:0006334">
    <property type="term" value="P:nucleosome assembly"/>
    <property type="evidence" value="ECO:0007669"/>
    <property type="project" value="InterPro"/>
</dbReference>
<dbReference type="CDD" id="cd00073">
    <property type="entry name" value="H15"/>
    <property type="match status" value="1"/>
</dbReference>
<dbReference type="FunFam" id="1.10.10.10:FF:000140">
    <property type="entry name" value="Histone H1.0"/>
    <property type="match status" value="1"/>
</dbReference>
<dbReference type="Gene3D" id="1.10.10.10">
    <property type="entry name" value="Winged helix-like DNA-binding domain superfamily/Winged helix DNA-binding domain"/>
    <property type="match status" value="1"/>
</dbReference>
<dbReference type="InterPro" id="IPR005819">
    <property type="entry name" value="H1/H5"/>
</dbReference>
<dbReference type="InterPro" id="IPR005818">
    <property type="entry name" value="Histone_H1/H5_H15"/>
</dbReference>
<dbReference type="InterPro" id="IPR036388">
    <property type="entry name" value="WH-like_DNA-bd_sf"/>
</dbReference>
<dbReference type="InterPro" id="IPR036390">
    <property type="entry name" value="WH_DNA-bd_sf"/>
</dbReference>
<dbReference type="Pfam" id="PF00538">
    <property type="entry name" value="Linker_histone"/>
    <property type="match status" value="1"/>
</dbReference>
<dbReference type="PRINTS" id="PR00624">
    <property type="entry name" value="HISTONEH5"/>
</dbReference>
<dbReference type="SMART" id="SM00526">
    <property type="entry name" value="H15"/>
    <property type="match status" value="1"/>
</dbReference>
<dbReference type="SUPFAM" id="SSF46785">
    <property type="entry name" value="Winged helix' DNA-binding domain"/>
    <property type="match status" value="1"/>
</dbReference>
<dbReference type="PROSITE" id="PS51504">
    <property type="entry name" value="H15"/>
    <property type="match status" value="1"/>
</dbReference>
<sequence>MSDPAPEVAPAAPVASPAKAKKEKKPKSDKPKKPKAPRTHPPVSEMVVNAIKTLKERGGSSLQAIKKFLVAQYKVDVEKLAPFIKKYLKGGAVVKGELLQTKGKGASGSFKLPAAAKKEKVAKKPMKATGEKKPKAAAKPKKAGEKKKSIAKKPKAATATKVKKPVAKSTKKQAAVKPAAKKAAPKPKAVPKPKAAKPKKEAKPKKAAAPKAAKKPAQKKPKATKKPAAKKA</sequence>
<name>H12_GLYBA</name>